<feature type="chain" id="PRO_1000074915" description="Serine hydroxymethyltransferase">
    <location>
        <begin position="1"/>
        <end position="420"/>
    </location>
</feature>
<feature type="binding site" evidence="1">
    <location>
        <position position="121"/>
    </location>
    <ligand>
        <name>(6S)-5,6,7,8-tetrahydrofolate</name>
        <dbReference type="ChEBI" id="CHEBI:57453"/>
    </ligand>
</feature>
<feature type="binding site" evidence="1">
    <location>
        <begin position="125"/>
        <end position="127"/>
    </location>
    <ligand>
        <name>(6S)-5,6,7,8-tetrahydrofolate</name>
        <dbReference type="ChEBI" id="CHEBI:57453"/>
    </ligand>
</feature>
<feature type="binding site" evidence="1">
    <location>
        <begin position="355"/>
        <end position="357"/>
    </location>
    <ligand>
        <name>(6S)-5,6,7,8-tetrahydrofolate</name>
        <dbReference type="ChEBI" id="CHEBI:57453"/>
    </ligand>
</feature>
<feature type="site" description="Plays an important role in substrate specificity" evidence="1">
    <location>
        <position position="229"/>
    </location>
</feature>
<feature type="modified residue" description="N6-(pyridoxal phosphate)lysine" evidence="1">
    <location>
        <position position="230"/>
    </location>
</feature>
<reference key="1">
    <citation type="journal article" date="2007" name="J. Bacteriol.">
        <title>Genome-wide transcriptional changes in Streptococcus gordonii in response to competence signaling peptide.</title>
        <authorList>
            <person name="Vickerman M.M."/>
            <person name="Iobst S."/>
            <person name="Jesionowski A.M."/>
            <person name="Gill S.R."/>
        </authorList>
    </citation>
    <scope>NUCLEOTIDE SEQUENCE [LARGE SCALE GENOMIC DNA]</scope>
    <source>
        <strain>Challis / ATCC 35105 / BCRC 15272 / CH1 / DL1 / V288</strain>
    </source>
</reference>
<proteinExistence type="inferred from homology"/>
<name>GLYA_STRGC</name>
<accession>A8AXC8</accession>
<dbReference type="EC" id="2.1.2.1" evidence="1"/>
<dbReference type="EMBL" id="CP000725">
    <property type="protein sequence ID" value="ABV09592.1"/>
    <property type="molecule type" value="Genomic_DNA"/>
</dbReference>
<dbReference type="RefSeq" id="WP_012000557.1">
    <property type="nucleotide sequence ID" value="NC_009785.1"/>
</dbReference>
<dbReference type="SMR" id="A8AXC8"/>
<dbReference type="STRING" id="467705.SGO_1151"/>
<dbReference type="KEGG" id="sgo:SGO_1151"/>
<dbReference type="eggNOG" id="COG0112">
    <property type="taxonomic scope" value="Bacteria"/>
</dbReference>
<dbReference type="HOGENOM" id="CLU_022477_2_1_9"/>
<dbReference type="UniPathway" id="UPA00193"/>
<dbReference type="UniPathway" id="UPA00288">
    <property type="reaction ID" value="UER01023"/>
</dbReference>
<dbReference type="Proteomes" id="UP000001131">
    <property type="component" value="Chromosome"/>
</dbReference>
<dbReference type="GO" id="GO:0005829">
    <property type="term" value="C:cytosol"/>
    <property type="evidence" value="ECO:0007669"/>
    <property type="project" value="TreeGrafter"/>
</dbReference>
<dbReference type="GO" id="GO:0004372">
    <property type="term" value="F:glycine hydroxymethyltransferase activity"/>
    <property type="evidence" value="ECO:0007669"/>
    <property type="project" value="UniProtKB-UniRule"/>
</dbReference>
<dbReference type="GO" id="GO:0030170">
    <property type="term" value="F:pyridoxal phosphate binding"/>
    <property type="evidence" value="ECO:0007669"/>
    <property type="project" value="UniProtKB-UniRule"/>
</dbReference>
<dbReference type="GO" id="GO:0019264">
    <property type="term" value="P:glycine biosynthetic process from serine"/>
    <property type="evidence" value="ECO:0007669"/>
    <property type="project" value="UniProtKB-UniRule"/>
</dbReference>
<dbReference type="GO" id="GO:0035999">
    <property type="term" value="P:tetrahydrofolate interconversion"/>
    <property type="evidence" value="ECO:0007669"/>
    <property type="project" value="UniProtKB-UniRule"/>
</dbReference>
<dbReference type="CDD" id="cd00378">
    <property type="entry name" value="SHMT"/>
    <property type="match status" value="1"/>
</dbReference>
<dbReference type="FunFam" id="3.40.640.10:FF:000001">
    <property type="entry name" value="Serine hydroxymethyltransferase"/>
    <property type="match status" value="1"/>
</dbReference>
<dbReference type="FunFam" id="3.90.1150.10:FF:000072">
    <property type="entry name" value="Serine hydroxymethyltransferase"/>
    <property type="match status" value="1"/>
</dbReference>
<dbReference type="Gene3D" id="3.90.1150.10">
    <property type="entry name" value="Aspartate Aminotransferase, domain 1"/>
    <property type="match status" value="1"/>
</dbReference>
<dbReference type="Gene3D" id="3.40.640.10">
    <property type="entry name" value="Type I PLP-dependent aspartate aminotransferase-like (Major domain)"/>
    <property type="match status" value="1"/>
</dbReference>
<dbReference type="HAMAP" id="MF_00051">
    <property type="entry name" value="SHMT"/>
    <property type="match status" value="1"/>
</dbReference>
<dbReference type="InterPro" id="IPR015424">
    <property type="entry name" value="PyrdxlP-dep_Trfase"/>
</dbReference>
<dbReference type="InterPro" id="IPR015421">
    <property type="entry name" value="PyrdxlP-dep_Trfase_major"/>
</dbReference>
<dbReference type="InterPro" id="IPR015422">
    <property type="entry name" value="PyrdxlP-dep_Trfase_small"/>
</dbReference>
<dbReference type="InterPro" id="IPR001085">
    <property type="entry name" value="Ser_HO-MeTrfase"/>
</dbReference>
<dbReference type="InterPro" id="IPR049943">
    <property type="entry name" value="Ser_HO-MeTrfase-like"/>
</dbReference>
<dbReference type="InterPro" id="IPR019798">
    <property type="entry name" value="Ser_HO-MeTrfase_PLP_BS"/>
</dbReference>
<dbReference type="InterPro" id="IPR039429">
    <property type="entry name" value="SHMT-like_dom"/>
</dbReference>
<dbReference type="NCBIfam" id="NF000586">
    <property type="entry name" value="PRK00011.1"/>
    <property type="match status" value="1"/>
</dbReference>
<dbReference type="PANTHER" id="PTHR11680">
    <property type="entry name" value="SERINE HYDROXYMETHYLTRANSFERASE"/>
    <property type="match status" value="1"/>
</dbReference>
<dbReference type="PANTHER" id="PTHR11680:SF35">
    <property type="entry name" value="SERINE HYDROXYMETHYLTRANSFERASE 1"/>
    <property type="match status" value="1"/>
</dbReference>
<dbReference type="Pfam" id="PF00464">
    <property type="entry name" value="SHMT"/>
    <property type="match status" value="1"/>
</dbReference>
<dbReference type="PIRSF" id="PIRSF000412">
    <property type="entry name" value="SHMT"/>
    <property type="match status" value="1"/>
</dbReference>
<dbReference type="SUPFAM" id="SSF53383">
    <property type="entry name" value="PLP-dependent transferases"/>
    <property type="match status" value="1"/>
</dbReference>
<dbReference type="PROSITE" id="PS00096">
    <property type="entry name" value="SHMT"/>
    <property type="match status" value="1"/>
</dbReference>
<protein>
    <recommendedName>
        <fullName evidence="1">Serine hydroxymethyltransferase</fullName>
        <shortName evidence="1">SHMT</shortName>
        <shortName evidence="1">Serine methylase</shortName>
        <ecNumber evidence="1">2.1.2.1</ecNumber>
    </recommendedName>
</protein>
<organism>
    <name type="scientific">Streptococcus gordonii (strain Challis / ATCC 35105 / BCRC 15272 / CH1 / DL1 / V288)</name>
    <dbReference type="NCBI Taxonomy" id="467705"/>
    <lineage>
        <taxon>Bacteria</taxon>
        <taxon>Bacillati</taxon>
        <taxon>Bacillota</taxon>
        <taxon>Bacilli</taxon>
        <taxon>Lactobacillales</taxon>
        <taxon>Streptococcaceae</taxon>
        <taxon>Streptococcus</taxon>
    </lineage>
</organism>
<keyword id="KW-0028">Amino-acid biosynthesis</keyword>
<keyword id="KW-0963">Cytoplasm</keyword>
<keyword id="KW-0554">One-carbon metabolism</keyword>
<keyword id="KW-0663">Pyridoxal phosphate</keyword>
<keyword id="KW-1185">Reference proteome</keyword>
<keyword id="KW-0808">Transferase</keyword>
<comment type="function">
    <text evidence="1">Catalyzes the reversible interconversion of serine and glycine with tetrahydrofolate (THF) serving as the one-carbon carrier. This reaction serves as the major source of one-carbon groups required for the biosynthesis of purines, thymidylate, methionine, and other important biomolecules. Also exhibits THF-independent aldolase activity toward beta-hydroxyamino acids, producing glycine and aldehydes, via a retro-aldol mechanism.</text>
</comment>
<comment type="catalytic activity">
    <reaction evidence="1">
        <text>(6R)-5,10-methylene-5,6,7,8-tetrahydrofolate + glycine + H2O = (6S)-5,6,7,8-tetrahydrofolate + L-serine</text>
        <dbReference type="Rhea" id="RHEA:15481"/>
        <dbReference type="ChEBI" id="CHEBI:15377"/>
        <dbReference type="ChEBI" id="CHEBI:15636"/>
        <dbReference type="ChEBI" id="CHEBI:33384"/>
        <dbReference type="ChEBI" id="CHEBI:57305"/>
        <dbReference type="ChEBI" id="CHEBI:57453"/>
        <dbReference type="EC" id="2.1.2.1"/>
    </reaction>
</comment>
<comment type="cofactor">
    <cofactor evidence="1">
        <name>pyridoxal 5'-phosphate</name>
        <dbReference type="ChEBI" id="CHEBI:597326"/>
    </cofactor>
</comment>
<comment type="pathway">
    <text evidence="1">One-carbon metabolism; tetrahydrofolate interconversion.</text>
</comment>
<comment type="pathway">
    <text evidence="1">Amino-acid biosynthesis; glycine biosynthesis; glycine from L-serine: step 1/1.</text>
</comment>
<comment type="subunit">
    <text evidence="1">Homodimer.</text>
</comment>
<comment type="subcellular location">
    <subcellularLocation>
        <location evidence="1">Cytoplasm</location>
    </subcellularLocation>
</comment>
<comment type="similarity">
    <text evidence="1">Belongs to the SHMT family.</text>
</comment>
<sequence length="420" mass="45538">MIFDQEDYKAFDPEIWEAVAKEEERQQHNIELIASENVVSKAVMAAQGSILTNKYAEGYPGRRYYGGTDVVDVIESLAIERAKEIFGAKFANVQPHSGSQANCAAYMALIEPGDTVMGMDLSAGGHLTHGASVSFSGQTYNFVSYSVDPETELLDFDAILKQAKEVQPKLIVAGASAYSHIIDFSKFREIADAVGAKLMVDMAHIAGLVAAGLHPSPVPYADITTTTTHKTLRGPRGGLILTNDEDLAKKINSAIFPGIQGGPLEHVIAAKAVAFKEVLDPAFKVYAQQILDNAQAMAQVFRQHDKFRVISDGTENHLFLVDVTKVVENGKVAQNLLDEVNITLNKNSIPYETLSPFKTSGIRIGTAAIAARGFGVTESIKVAELIIKALENAENEAVLNQVRAEVRELTDAFPLYEGLN</sequence>
<gene>
    <name evidence="1" type="primary">glyA</name>
    <name type="ordered locus">SGO_1151</name>
</gene>
<evidence type="ECO:0000255" key="1">
    <source>
        <dbReference type="HAMAP-Rule" id="MF_00051"/>
    </source>
</evidence>